<organism>
    <name type="scientific">Yersinia pseudotuberculosis serotype I (strain IP32953)</name>
    <dbReference type="NCBI Taxonomy" id="273123"/>
    <lineage>
        <taxon>Bacteria</taxon>
        <taxon>Pseudomonadati</taxon>
        <taxon>Pseudomonadota</taxon>
        <taxon>Gammaproteobacteria</taxon>
        <taxon>Enterobacterales</taxon>
        <taxon>Yersiniaceae</taxon>
        <taxon>Yersinia</taxon>
    </lineage>
</organism>
<gene>
    <name evidence="1" type="primary">nqrF</name>
    <name type="ordered locus">YPTB0892</name>
</gene>
<protein>
    <recommendedName>
        <fullName evidence="1">Na(+)-translocating NADH-quinone reductase subunit F</fullName>
        <shortName evidence="1">Na(+)-NQR subunit F</shortName>
        <shortName evidence="1">Na(+)-translocating NQR subunit F</shortName>
        <ecNumber evidence="1">7.2.1.1</ecNumber>
    </recommendedName>
    <alternativeName>
        <fullName evidence="1">NQR complex subunit F</fullName>
    </alternativeName>
    <alternativeName>
        <fullName evidence="1">NQR-1 subunit F</fullName>
    </alternativeName>
</protein>
<sequence>MEIILGVVMFTLIVLALTVMILFAKSKLVNTGDITVEINEDEDKSFTAPAGDKLLNMLSSHGIFVSSACGGGGSCGQCRVTIKEGGGDILPTELSHISKREAKEGCRLACQVNVKQNLKIELPEEIFGVKKWTCEVISNDNKATFIKELKLKIPDGDVVPFRAGGFIQIEAEPHTVKYADFDVPTEYRGDWDKFNLFRFESVATEPTVRAYSMANYPEEHGIILLNVRIATPPPSVPDAPPGIMSSYIWSLKPGDKVVISGPFGEFFAKDTDAEMVFIGGGAGMAPMRSHIFDQLKRLHSKRKISFWYGARSRREMFYEEDFDQLQAENDNFRWHVALSDPQPEDNWTGYTGFIHNVLLENYLKDHPAPEDCEFYMCGPPMMNAAVIKMLKDLGVEDENIMLDDFGG</sequence>
<evidence type="ECO:0000255" key="1">
    <source>
        <dbReference type="HAMAP-Rule" id="MF_00430"/>
    </source>
</evidence>
<reference key="1">
    <citation type="journal article" date="2004" name="Proc. Natl. Acad. Sci. U.S.A.">
        <title>Insights into the evolution of Yersinia pestis through whole-genome comparison with Yersinia pseudotuberculosis.</title>
        <authorList>
            <person name="Chain P.S.G."/>
            <person name="Carniel E."/>
            <person name="Larimer F.W."/>
            <person name="Lamerdin J."/>
            <person name="Stoutland P.O."/>
            <person name="Regala W.M."/>
            <person name="Georgescu A.M."/>
            <person name="Vergez L.M."/>
            <person name="Land M.L."/>
            <person name="Motin V.L."/>
            <person name="Brubaker R.R."/>
            <person name="Fowler J."/>
            <person name="Hinnebusch J."/>
            <person name="Marceau M."/>
            <person name="Medigue C."/>
            <person name="Simonet M."/>
            <person name="Chenal-Francisque V."/>
            <person name="Souza B."/>
            <person name="Dacheux D."/>
            <person name="Elliott J.M."/>
            <person name="Derbise A."/>
            <person name="Hauser L.J."/>
            <person name="Garcia E."/>
        </authorList>
    </citation>
    <scope>NUCLEOTIDE SEQUENCE [LARGE SCALE GENOMIC DNA]</scope>
    <source>
        <strain>IP32953</strain>
    </source>
</reference>
<keyword id="KW-0001">2Fe-2S</keyword>
<keyword id="KW-0997">Cell inner membrane</keyword>
<keyword id="KW-1003">Cell membrane</keyword>
<keyword id="KW-0274">FAD</keyword>
<keyword id="KW-0285">Flavoprotein</keyword>
<keyword id="KW-0406">Ion transport</keyword>
<keyword id="KW-0408">Iron</keyword>
<keyword id="KW-0411">Iron-sulfur</keyword>
<keyword id="KW-0472">Membrane</keyword>
<keyword id="KW-0479">Metal-binding</keyword>
<keyword id="KW-0520">NAD</keyword>
<keyword id="KW-0915">Sodium</keyword>
<keyword id="KW-0739">Sodium transport</keyword>
<keyword id="KW-1278">Translocase</keyword>
<keyword id="KW-0812">Transmembrane</keyword>
<keyword id="KW-1133">Transmembrane helix</keyword>
<keyword id="KW-0813">Transport</keyword>
<keyword id="KW-0830">Ubiquinone</keyword>
<accession>Q66E01</accession>
<comment type="function">
    <text evidence="1">NQR complex catalyzes the reduction of ubiquinone-1 to ubiquinol by two successive reactions, coupled with the transport of Na(+) ions from the cytoplasm to the periplasm. The first step is catalyzed by NqrF, which accepts electrons from NADH and reduces ubiquinone-1 to ubisemiquinone by a one-electron transfer pathway.</text>
</comment>
<comment type="catalytic activity">
    <reaction evidence="1">
        <text>a ubiquinone + n Na(+)(in) + NADH + H(+) = a ubiquinol + n Na(+)(out) + NAD(+)</text>
        <dbReference type="Rhea" id="RHEA:47748"/>
        <dbReference type="Rhea" id="RHEA-COMP:9565"/>
        <dbReference type="Rhea" id="RHEA-COMP:9566"/>
        <dbReference type="ChEBI" id="CHEBI:15378"/>
        <dbReference type="ChEBI" id="CHEBI:16389"/>
        <dbReference type="ChEBI" id="CHEBI:17976"/>
        <dbReference type="ChEBI" id="CHEBI:29101"/>
        <dbReference type="ChEBI" id="CHEBI:57540"/>
        <dbReference type="ChEBI" id="CHEBI:57945"/>
        <dbReference type="EC" id="7.2.1.1"/>
    </reaction>
</comment>
<comment type="cofactor">
    <cofactor evidence="1">
        <name>[2Fe-2S] cluster</name>
        <dbReference type="ChEBI" id="CHEBI:190135"/>
    </cofactor>
    <text evidence="1">Binds 1 [2Fe-2S] cluster.</text>
</comment>
<comment type="cofactor">
    <cofactor evidence="1">
        <name>FAD</name>
        <dbReference type="ChEBI" id="CHEBI:57692"/>
    </cofactor>
</comment>
<comment type="subunit">
    <text evidence="1">Composed of six subunits; NqrA, NqrB, NqrC, NqrD, NqrE and NqrF.</text>
</comment>
<comment type="subcellular location">
    <subcellularLocation>
        <location evidence="1">Cell inner membrane</location>
        <topology evidence="1">Single-pass membrane protein</topology>
    </subcellularLocation>
</comment>
<comment type="similarity">
    <text evidence="1">Belongs to the NqrF family.</text>
</comment>
<feature type="chain" id="PRO_1000080601" description="Na(+)-translocating NADH-quinone reductase subunit F">
    <location>
        <begin position="1"/>
        <end position="407"/>
    </location>
</feature>
<feature type="transmembrane region" description="Helical" evidence="1">
    <location>
        <begin position="3"/>
        <end position="23"/>
    </location>
</feature>
<feature type="domain" description="2Fe-2S ferredoxin-type" evidence="1">
    <location>
        <begin position="32"/>
        <end position="126"/>
    </location>
</feature>
<feature type="domain" description="FAD-binding FR-type" evidence="1">
    <location>
        <begin position="129"/>
        <end position="269"/>
    </location>
</feature>
<feature type="binding site" evidence="1">
    <location>
        <position position="69"/>
    </location>
    <ligand>
        <name>[2Fe-2S] cluster</name>
        <dbReference type="ChEBI" id="CHEBI:190135"/>
    </ligand>
</feature>
<feature type="binding site" evidence="1">
    <location>
        <position position="75"/>
    </location>
    <ligand>
        <name>[2Fe-2S] cluster</name>
        <dbReference type="ChEBI" id="CHEBI:190135"/>
    </ligand>
</feature>
<feature type="binding site" evidence="1">
    <location>
        <position position="78"/>
    </location>
    <ligand>
        <name>[2Fe-2S] cluster</name>
        <dbReference type="ChEBI" id="CHEBI:190135"/>
    </ligand>
</feature>
<feature type="binding site" evidence="1">
    <location>
        <position position="110"/>
    </location>
    <ligand>
        <name>[2Fe-2S] cluster</name>
        <dbReference type="ChEBI" id="CHEBI:190135"/>
    </ligand>
</feature>
<name>NQRF_YERPS</name>
<proteinExistence type="inferred from homology"/>
<dbReference type="EC" id="7.2.1.1" evidence="1"/>
<dbReference type="EMBL" id="BX936398">
    <property type="protein sequence ID" value="CAH20132.1"/>
    <property type="molecule type" value="Genomic_DNA"/>
</dbReference>
<dbReference type="RefSeq" id="WP_011191842.1">
    <property type="nucleotide sequence ID" value="NC_006155.1"/>
</dbReference>
<dbReference type="SMR" id="Q66E01"/>
<dbReference type="KEGG" id="ypo:BZ17_1654"/>
<dbReference type="KEGG" id="yps:YPTB0892"/>
<dbReference type="PATRIC" id="fig|273123.14.peg.1759"/>
<dbReference type="Proteomes" id="UP000001011">
    <property type="component" value="Chromosome"/>
</dbReference>
<dbReference type="GO" id="GO:0005886">
    <property type="term" value="C:plasma membrane"/>
    <property type="evidence" value="ECO:0007669"/>
    <property type="project" value="UniProtKB-SubCell"/>
</dbReference>
<dbReference type="GO" id="GO:0051537">
    <property type="term" value="F:2 iron, 2 sulfur cluster binding"/>
    <property type="evidence" value="ECO:0007669"/>
    <property type="project" value="UniProtKB-KW"/>
</dbReference>
<dbReference type="GO" id="GO:0009055">
    <property type="term" value="F:electron transfer activity"/>
    <property type="evidence" value="ECO:0007669"/>
    <property type="project" value="UniProtKB-UniRule"/>
</dbReference>
<dbReference type="GO" id="GO:0046872">
    <property type="term" value="F:metal ion binding"/>
    <property type="evidence" value="ECO:0007669"/>
    <property type="project" value="UniProtKB-KW"/>
</dbReference>
<dbReference type="GO" id="GO:0016655">
    <property type="term" value="F:oxidoreductase activity, acting on NAD(P)H, quinone or similar compound as acceptor"/>
    <property type="evidence" value="ECO:0007669"/>
    <property type="project" value="InterPro"/>
</dbReference>
<dbReference type="GO" id="GO:0006814">
    <property type="term" value="P:sodium ion transport"/>
    <property type="evidence" value="ECO:0007669"/>
    <property type="project" value="UniProtKB-UniRule"/>
</dbReference>
<dbReference type="CDD" id="cd06188">
    <property type="entry name" value="NADH_quinone_reductase"/>
    <property type="match status" value="1"/>
</dbReference>
<dbReference type="FunFam" id="3.40.50.80:FF:000014">
    <property type="entry name" value="Na(+)-translocating NADH-quinone reductase subunit F"/>
    <property type="match status" value="1"/>
</dbReference>
<dbReference type="Gene3D" id="3.10.20.30">
    <property type="match status" value="1"/>
</dbReference>
<dbReference type="Gene3D" id="3.40.50.80">
    <property type="entry name" value="Nucleotide-binding domain of ferredoxin-NADP reductase (FNR) module"/>
    <property type="match status" value="1"/>
</dbReference>
<dbReference type="Gene3D" id="2.40.30.10">
    <property type="entry name" value="Translation factors"/>
    <property type="match status" value="1"/>
</dbReference>
<dbReference type="HAMAP" id="MF_00430">
    <property type="entry name" value="NqrF"/>
    <property type="match status" value="1"/>
</dbReference>
<dbReference type="InterPro" id="IPR036010">
    <property type="entry name" value="2Fe-2S_ferredoxin-like_sf"/>
</dbReference>
<dbReference type="InterPro" id="IPR001041">
    <property type="entry name" value="2Fe-2S_ferredoxin-type"/>
</dbReference>
<dbReference type="InterPro" id="IPR012675">
    <property type="entry name" value="Beta-grasp_dom_sf"/>
</dbReference>
<dbReference type="InterPro" id="IPR008333">
    <property type="entry name" value="Cbr1-like_FAD-bd_dom"/>
</dbReference>
<dbReference type="InterPro" id="IPR017927">
    <property type="entry name" value="FAD-bd_FR_type"/>
</dbReference>
<dbReference type="InterPro" id="IPR001709">
    <property type="entry name" value="Flavoprot_Pyr_Nucl_cyt_Rdtase"/>
</dbReference>
<dbReference type="InterPro" id="IPR039261">
    <property type="entry name" value="FNR_nucleotide-bd"/>
</dbReference>
<dbReference type="InterPro" id="IPR010205">
    <property type="entry name" value="NqrF"/>
</dbReference>
<dbReference type="InterPro" id="IPR001433">
    <property type="entry name" value="OxRdtase_FAD/NAD-bd"/>
</dbReference>
<dbReference type="InterPro" id="IPR017938">
    <property type="entry name" value="Riboflavin_synthase-like_b-brl"/>
</dbReference>
<dbReference type="NCBIfam" id="TIGR01941">
    <property type="entry name" value="nqrF"/>
    <property type="match status" value="1"/>
</dbReference>
<dbReference type="PANTHER" id="PTHR43644">
    <property type="entry name" value="NA(+)-TRANSLOCATING NADH-QUINONE REDUCTASE SUBUNIT"/>
    <property type="match status" value="1"/>
</dbReference>
<dbReference type="PANTHER" id="PTHR43644:SF1">
    <property type="entry name" value="NAD(P)H-FLAVIN REDUCTASE"/>
    <property type="match status" value="1"/>
</dbReference>
<dbReference type="Pfam" id="PF00970">
    <property type="entry name" value="FAD_binding_6"/>
    <property type="match status" value="1"/>
</dbReference>
<dbReference type="Pfam" id="PF00111">
    <property type="entry name" value="Fer2"/>
    <property type="match status" value="1"/>
</dbReference>
<dbReference type="Pfam" id="PF00175">
    <property type="entry name" value="NAD_binding_1"/>
    <property type="match status" value="1"/>
</dbReference>
<dbReference type="PIRSF" id="PIRSF000044">
    <property type="entry name" value="Cis_Diol_DH_RD"/>
    <property type="match status" value="1"/>
</dbReference>
<dbReference type="PRINTS" id="PR00371">
    <property type="entry name" value="FPNCR"/>
</dbReference>
<dbReference type="SUPFAM" id="SSF54292">
    <property type="entry name" value="2Fe-2S ferredoxin-like"/>
    <property type="match status" value="1"/>
</dbReference>
<dbReference type="SUPFAM" id="SSF52343">
    <property type="entry name" value="Ferredoxin reductase-like, C-terminal NADP-linked domain"/>
    <property type="match status" value="1"/>
</dbReference>
<dbReference type="SUPFAM" id="SSF63380">
    <property type="entry name" value="Riboflavin synthase domain-like"/>
    <property type="match status" value="1"/>
</dbReference>
<dbReference type="PROSITE" id="PS51085">
    <property type="entry name" value="2FE2S_FER_2"/>
    <property type="match status" value="1"/>
</dbReference>
<dbReference type="PROSITE" id="PS51384">
    <property type="entry name" value="FAD_FR"/>
    <property type="match status" value="1"/>
</dbReference>